<reference key="1">
    <citation type="journal article" date="1993" name="Virus Res.">
        <title>Mapping and DNA sequence analysis of the cytomegalovirus transforming domain III (mtrIII).</title>
        <authorList>
            <person name="Wang J."/>
            <person name="Razzaque A."/>
        </authorList>
    </citation>
    <scope>NUCLEOTIDE SEQUENCE [GENOMIC DNA]</scope>
</reference>
<reference key="2">
    <citation type="journal article" date="2004" name="J. Gen. Virol.">
        <title>Genetic content of wild-type human cytomegalovirus.</title>
        <authorList>
            <person name="Dolan A."/>
            <person name="Cunningham C."/>
            <person name="Hector R.D."/>
            <person name="Hassan-Walker A.F."/>
            <person name="Lee L."/>
            <person name="Addison C."/>
            <person name="Dargan D.J."/>
            <person name="McGeoch D.J."/>
            <person name="Gatherer D."/>
            <person name="Emery V.C."/>
            <person name="Griffiths P.D."/>
            <person name="Sinzger C."/>
            <person name="McSharry B.P."/>
            <person name="Wilkinson G.W.G."/>
            <person name="Davison A.J."/>
        </authorList>
    </citation>
    <scope>NUCLEOTIDE SEQUENCE [GENOMIC DNA]</scope>
</reference>
<organismHost>
    <name type="scientific">Homo sapiens</name>
    <name type="common">Human</name>
    <dbReference type="NCBI Taxonomy" id="9606"/>
</organismHost>
<evidence type="ECO:0000255" key="1"/>
<evidence type="ECO:0000256" key="2">
    <source>
        <dbReference type="SAM" id="MobiDB-lite"/>
    </source>
</evidence>
<evidence type="ECO:0000305" key="3"/>
<keyword id="KW-0325">Glycoprotein</keyword>
<keyword id="KW-0472">Membrane</keyword>
<keyword id="KW-0732">Signal</keyword>
<keyword id="KW-0812">Transmembrane</keyword>
<keyword id="KW-1133">Transmembrane helix</keyword>
<keyword id="KW-0261">Viral envelope protein</keyword>
<keyword id="KW-0946">Virion</keyword>
<feature type="signal peptide" evidence="1">
    <location>
        <begin position="1"/>
        <end position="29"/>
    </location>
</feature>
<feature type="chain" id="PRO_0000037460" description="Envelope glycoprotein UL132">
    <location>
        <begin position="30"/>
        <end position="270"/>
    </location>
</feature>
<feature type="transmembrane region" description="Helical" evidence="1">
    <location>
        <begin position="84"/>
        <end position="104"/>
    </location>
</feature>
<feature type="region of interest" description="Disordered" evidence="2">
    <location>
        <begin position="33"/>
        <end position="70"/>
    </location>
</feature>
<feature type="region of interest" description="Disordered" evidence="2">
    <location>
        <begin position="129"/>
        <end position="179"/>
    </location>
</feature>
<feature type="compositionally biased region" description="Low complexity" evidence="2">
    <location>
        <begin position="33"/>
        <end position="67"/>
    </location>
</feature>
<feature type="compositionally biased region" description="Low complexity" evidence="2">
    <location>
        <begin position="133"/>
        <end position="147"/>
    </location>
</feature>
<feature type="glycosylation site" description="N-linked (GlcNAc...) asparagine; by host" evidence="1">
    <location>
        <position position="31"/>
    </location>
</feature>
<feature type="glycosylation site" description="N-linked (GlcNAc...) asparagine; by host" evidence="1">
    <location>
        <position position="61"/>
    </location>
</feature>
<feature type="glycosylation site" description="N-linked (GlcNAc...) asparagine; by host" evidence="1">
    <location>
        <position position="245"/>
    </location>
</feature>
<protein>
    <recommendedName>
        <fullName>Envelope glycoprotein UL132</fullName>
        <shortName>L3</shortName>
    </recommendedName>
</protein>
<dbReference type="EMBL" id="L19942">
    <property type="protein sequence ID" value="AAA75382.1"/>
    <property type="molecule type" value="Genomic_DNA"/>
</dbReference>
<dbReference type="EMBL" id="FJ616285">
    <property type="protein sequence ID" value="AAR31454.1"/>
    <property type="molecule type" value="Genomic_DNA"/>
</dbReference>
<dbReference type="PIR" id="S09898">
    <property type="entry name" value="S09898"/>
</dbReference>
<dbReference type="SMR" id="P69339"/>
<dbReference type="GlyCosmos" id="P69339">
    <property type="glycosylation" value="3 sites, No reported glycans"/>
</dbReference>
<dbReference type="Proteomes" id="UP000006907">
    <property type="component" value="Segment"/>
</dbReference>
<dbReference type="GO" id="GO:0016020">
    <property type="term" value="C:membrane"/>
    <property type="evidence" value="ECO:0007669"/>
    <property type="project" value="UniProtKB-KW"/>
</dbReference>
<dbReference type="GO" id="GO:0019031">
    <property type="term" value="C:viral envelope"/>
    <property type="evidence" value="ECO:0007669"/>
    <property type="project" value="UniProtKB-KW"/>
</dbReference>
<dbReference type="GO" id="GO:0055036">
    <property type="term" value="C:virion membrane"/>
    <property type="evidence" value="ECO:0007669"/>
    <property type="project" value="UniProtKB-SubCell"/>
</dbReference>
<dbReference type="InterPro" id="IPR021023">
    <property type="entry name" value="UL132"/>
</dbReference>
<dbReference type="Pfam" id="PF11359">
    <property type="entry name" value="gpUL132"/>
    <property type="match status" value="1"/>
</dbReference>
<proteinExistence type="inferred from homology"/>
<name>UL132_HCMVT</name>
<organism>
    <name type="scientific">Human cytomegalovirus (strain Towne)</name>
    <name type="common">HHV-5</name>
    <name type="synonym">Human herpesvirus 5</name>
    <dbReference type="NCBI Taxonomy" id="10363"/>
    <lineage>
        <taxon>Viruses</taxon>
        <taxon>Duplodnaviria</taxon>
        <taxon>Heunggongvirae</taxon>
        <taxon>Peploviricota</taxon>
        <taxon>Herviviricetes</taxon>
        <taxon>Herpesvirales</taxon>
        <taxon>Orthoherpesviridae</taxon>
        <taxon>Betaherpesvirinae</taxon>
        <taxon>Cytomegalovirus</taxon>
        <taxon>Cytomegalovirus humanbeta5</taxon>
        <taxon>Human cytomegalovirus</taxon>
    </lineage>
</organism>
<sequence length="270" mass="29972">MPAPRGLLRATFLVLVAFGLLLHIDFSDATNMTSSTNVPTSTSSRNTVESTTSSEPTTETNMTTARESSVHDARNDEIMKVLAILFYIVTGTSIFSFIAVLIAVVYSSCCKHPGRFRFADEEAVNLLDDTDDSGGSSPFGSGSRRGSQIPAGFCSSSPYQRLETRDWDEEEEASAARERMKHDPENVIYFRKDGNLDTSFVNPNYGRGSPLTIESHLSDNEEDPIRYYVSVYDELTASEMEEPSNSTSWQIPKLMKVAMQPVSLRDPEYD</sequence>
<gene>
    <name type="primary">UL132</name>
</gene>
<accession>P69339</accession>
<accession>P16774</accession>
<accession>Q7M6R9</accession>
<comment type="subcellular location">
    <subcellularLocation>
        <location evidence="3">Virion membrane</location>
        <topology evidence="3">Single-pass membrane protein</topology>
    </subcellularLocation>
</comment>